<dbReference type="EC" id="1.11.1.21" evidence="1"/>
<dbReference type="EMBL" id="CP000447">
    <property type="protein sequence ID" value="ABI72959.1"/>
    <property type="molecule type" value="Genomic_DNA"/>
</dbReference>
<dbReference type="RefSeq" id="WP_011638565.1">
    <property type="nucleotide sequence ID" value="NC_008345.1"/>
</dbReference>
<dbReference type="SMR" id="Q07YF5"/>
<dbReference type="STRING" id="318167.Sfri_3122"/>
<dbReference type="PeroxiBase" id="2663">
    <property type="entry name" value="SfrCP02_NCIMB400"/>
</dbReference>
<dbReference type="KEGG" id="sfr:Sfri_3122"/>
<dbReference type="eggNOG" id="COG0376">
    <property type="taxonomic scope" value="Bacteria"/>
</dbReference>
<dbReference type="HOGENOM" id="CLU_025424_2_0_6"/>
<dbReference type="OrthoDB" id="9759743at2"/>
<dbReference type="Proteomes" id="UP000000684">
    <property type="component" value="Chromosome"/>
</dbReference>
<dbReference type="GO" id="GO:0005829">
    <property type="term" value="C:cytosol"/>
    <property type="evidence" value="ECO:0007669"/>
    <property type="project" value="TreeGrafter"/>
</dbReference>
<dbReference type="GO" id="GO:0004096">
    <property type="term" value="F:catalase activity"/>
    <property type="evidence" value="ECO:0007669"/>
    <property type="project" value="UniProtKB-UniRule"/>
</dbReference>
<dbReference type="GO" id="GO:0020037">
    <property type="term" value="F:heme binding"/>
    <property type="evidence" value="ECO:0007669"/>
    <property type="project" value="InterPro"/>
</dbReference>
<dbReference type="GO" id="GO:0046872">
    <property type="term" value="F:metal ion binding"/>
    <property type="evidence" value="ECO:0007669"/>
    <property type="project" value="UniProtKB-KW"/>
</dbReference>
<dbReference type="GO" id="GO:0070301">
    <property type="term" value="P:cellular response to hydrogen peroxide"/>
    <property type="evidence" value="ECO:0007669"/>
    <property type="project" value="TreeGrafter"/>
</dbReference>
<dbReference type="GO" id="GO:0042744">
    <property type="term" value="P:hydrogen peroxide catabolic process"/>
    <property type="evidence" value="ECO:0007669"/>
    <property type="project" value="UniProtKB-KW"/>
</dbReference>
<dbReference type="CDD" id="cd08200">
    <property type="entry name" value="catalase_peroxidase_2"/>
    <property type="match status" value="1"/>
</dbReference>
<dbReference type="FunFam" id="1.10.420.10:FF:000004">
    <property type="entry name" value="Catalase-peroxidase"/>
    <property type="match status" value="1"/>
</dbReference>
<dbReference type="FunFam" id="1.10.520.10:FF:000002">
    <property type="entry name" value="Catalase-peroxidase"/>
    <property type="match status" value="1"/>
</dbReference>
<dbReference type="Gene3D" id="1.10.520.10">
    <property type="match status" value="2"/>
</dbReference>
<dbReference type="Gene3D" id="1.10.420.10">
    <property type="entry name" value="Peroxidase, domain 2"/>
    <property type="match status" value="2"/>
</dbReference>
<dbReference type="HAMAP" id="MF_01961">
    <property type="entry name" value="Catal_peroxid"/>
    <property type="match status" value="1"/>
</dbReference>
<dbReference type="InterPro" id="IPR000763">
    <property type="entry name" value="Catalase_peroxidase"/>
</dbReference>
<dbReference type="InterPro" id="IPR002016">
    <property type="entry name" value="Haem_peroxidase"/>
</dbReference>
<dbReference type="InterPro" id="IPR010255">
    <property type="entry name" value="Haem_peroxidase_sf"/>
</dbReference>
<dbReference type="InterPro" id="IPR019794">
    <property type="entry name" value="Peroxidases_AS"/>
</dbReference>
<dbReference type="InterPro" id="IPR019793">
    <property type="entry name" value="Peroxidases_heam-ligand_BS"/>
</dbReference>
<dbReference type="NCBIfam" id="TIGR00198">
    <property type="entry name" value="cat_per_HPI"/>
    <property type="match status" value="1"/>
</dbReference>
<dbReference type="NCBIfam" id="NF011635">
    <property type="entry name" value="PRK15061.1"/>
    <property type="match status" value="1"/>
</dbReference>
<dbReference type="PANTHER" id="PTHR30555:SF0">
    <property type="entry name" value="CATALASE-PEROXIDASE"/>
    <property type="match status" value="1"/>
</dbReference>
<dbReference type="PANTHER" id="PTHR30555">
    <property type="entry name" value="HYDROPEROXIDASE I, BIFUNCTIONAL CATALASE-PEROXIDASE"/>
    <property type="match status" value="1"/>
</dbReference>
<dbReference type="Pfam" id="PF00141">
    <property type="entry name" value="peroxidase"/>
    <property type="match status" value="2"/>
</dbReference>
<dbReference type="PRINTS" id="PR00460">
    <property type="entry name" value="BPEROXIDASE"/>
</dbReference>
<dbReference type="PRINTS" id="PR00458">
    <property type="entry name" value="PEROXIDASE"/>
</dbReference>
<dbReference type="SUPFAM" id="SSF48113">
    <property type="entry name" value="Heme-dependent peroxidases"/>
    <property type="match status" value="2"/>
</dbReference>
<dbReference type="PROSITE" id="PS00435">
    <property type="entry name" value="PEROXIDASE_1"/>
    <property type="match status" value="1"/>
</dbReference>
<dbReference type="PROSITE" id="PS00436">
    <property type="entry name" value="PEROXIDASE_2"/>
    <property type="match status" value="1"/>
</dbReference>
<dbReference type="PROSITE" id="PS50873">
    <property type="entry name" value="PEROXIDASE_4"/>
    <property type="match status" value="2"/>
</dbReference>
<sequence>MKHPLFNQKVLAGFVSMLLISGSAFASNNEKSEMTKPKGAVGTGVALENQARTNQFWWPDQLNLSALRDHDKRSNPYGENFDYAKAFNSLDLDKVKLDINALLTTSQDWWPSDYSNYGPFFIRMTWHSAGTYRTLDGRGGAGGGQQRFEPLNSWPDNASLDKARRLLWPIKMKYGEAISWSDLIVLAGNVSLENMGFKTYGFAGGRHDDWEPDMVYWGPEIEMLASDREDNGGKLQRPLGATHMGLIYVNPEGPKGVPDPLGSAKNIRVAFERMAMNDEETLALIAGGHTFGKMHGAHKPKDCLGAEPAAAGIEEQGLGWKNKCGKGHSEDTITSGLEGAWTQAPTKWTSLYLSNLLTFEWKQTRSPAGAIQWIPTDESLHKAVPDAHVKGKFHAPVMTTADLALKYDPEYRKIAERFLADPEEYRLAFAKAWYKLTHRDMGPSRNFLGKEVPKESLIWQDPIDDKTQSNIDADGVQELKAQILKSNLTVSELVRVAWASAASYRHSDMRGGANGARIALSPQKDWSVNNPAETAKVIKTLKAIQEDYNDSLFSKSKVSLADLIVLGGTAAIEKAAKDAGFTVSVPFNAGRGDATQAMTDINAFSLLELTSDGFRNYFDAQQSYKSPVDMLVDKADQLNLSVPEMTVLVGGLRALDANYKGLKHGVLTSTPGTLNNDFFVNLLDMSTVWKKSSTDGIYEGFDRQSGHKKWTATSVDLVFGSNSELRAVSEVYAFDTSKQKFVEDFAAAWTKVMNLDR</sequence>
<keyword id="KW-0349">Heme</keyword>
<keyword id="KW-0376">Hydrogen peroxide</keyword>
<keyword id="KW-0408">Iron</keyword>
<keyword id="KW-0479">Metal-binding</keyword>
<keyword id="KW-0560">Oxidoreductase</keyword>
<keyword id="KW-0575">Peroxidase</keyword>
<keyword id="KW-1185">Reference proteome</keyword>
<keyword id="KW-0732">Signal</keyword>
<protein>
    <recommendedName>
        <fullName evidence="1">Catalase-peroxidase 2</fullName>
        <shortName evidence="1">CP 2</shortName>
        <ecNumber evidence="1">1.11.1.21</ecNumber>
    </recommendedName>
    <alternativeName>
        <fullName evidence="1">Peroxidase/catalase 2</fullName>
    </alternativeName>
</protein>
<gene>
    <name evidence="1" type="primary">katG2</name>
    <name type="ordered locus">Sfri_3122</name>
</gene>
<evidence type="ECO:0000255" key="1">
    <source>
        <dbReference type="HAMAP-Rule" id="MF_01961"/>
    </source>
</evidence>
<accession>Q07YF5</accession>
<organism>
    <name type="scientific">Shewanella frigidimarina (strain NCIMB 400)</name>
    <dbReference type="NCBI Taxonomy" id="318167"/>
    <lineage>
        <taxon>Bacteria</taxon>
        <taxon>Pseudomonadati</taxon>
        <taxon>Pseudomonadota</taxon>
        <taxon>Gammaproteobacteria</taxon>
        <taxon>Alteromonadales</taxon>
        <taxon>Shewanellaceae</taxon>
        <taxon>Shewanella</taxon>
    </lineage>
</organism>
<comment type="function">
    <text evidence="1">Bifunctional enzyme with both catalase and broad-spectrum peroxidase activity.</text>
</comment>
<comment type="catalytic activity">
    <reaction evidence="1">
        <text>H2O2 + AH2 = A + 2 H2O</text>
        <dbReference type="Rhea" id="RHEA:30275"/>
        <dbReference type="ChEBI" id="CHEBI:13193"/>
        <dbReference type="ChEBI" id="CHEBI:15377"/>
        <dbReference type="ChEBI" id="CHEBI:16240"/>
        <dbReference type="ChEBI" id="CHEBI:17499"/>
        <dbReference type="EC" id="1.11.1.21"/>
    </reaction>
</comment>
<comment type="catalytic activity">
    <reaction evidence="1">
        <text>2 H2O2 = O2 + 2 H2O</text>
        <dbReference type="Rhea" id="RHEA:20309"/>
        <dbReference type="ChEBI" id="CHEBI:15377"/>
        <dbReference type="ChEBI" id="CHEBI:15379"/>
        <dbReference type="ChEBI" id="CHEBI:16240"/>
        <dbReference type="EC" id="1.11.1.21"/>
    </reaction>
</comment>
<comment type="cofactor">
    <cofactor evidence="1">
        <name>heme b</name>
        <dbReference type="ChEBI" id="CHEBI:60344"/>
    </cofactor>
    <text evidence="1">Binds 1 heme b (iron(II)-protoporphyrin IX) group per dimer.</text>
</comment>
<comment type="subunit">
    <text evidence="1">Homodimer or homotetramer.</text>
</comment>
<comment type="PTM">
    <text evidence="1">Formation of the three residue Trp-Tyr-Met cross-link is important for the catalase, but not the peroxidase activity of the enzyme.</text>
</comment>
<comment type="similarity">
    <text evidence="1">Belongs to the peroxidase family. Peroxidase/catalase subfamily.</text>
</comment>
<feature type="signal peptide" evidence="1">
    <location>
        <begin position="1"/>
        <end position="26"/>
    </location>
</feature>
<feature type="chain" id="PRO_5000130998" description="Catalase-peroxidase 2">
    <location>
        <begin position="27"/>
        <end position="757"/>
    </location>
</feature>
<feature type="active site" description="Proton acceptor" evidence="1">
    <location>
        <position position="127"/>
    </location>
</feature>
<feature type="binding site" description="axial binding residue" evidence="1">
    <location>
        <position position="289"/>
    </location>
    <ligand>
        <name>heme b</name>
        <dbReference type="ChEBI" id="CHEBI:60344"/>
    </ligand>
    <ligandPart>
        <name>Fe</name>
        <dbReference type="ChEBI" id="CHEBI:18248"/>
    </ligandPart>
</feature>
<feature type="site" description="Transition state stabilizer" evidence="1">
    <location>
        <position position="123"/>
    </location>
</feature>
<feature type="cross-link" description="Tryptophyl-tyrosyl-methioninium (Trp-Tyr) (with M-274)" evidence="1">
    <location>
        <begin position="126"/>
        <end position="248"/>
    </location>
</feature>
<feature type="cross-link" description="Tryptophyl-tyrosyl-methioninium (Tyr-Met) (with W-126)" evidence="1">
    <location>
        <begin position="248"/>
        <end position="274"/>
    </location>
</feature>
<reference key="1">
    <citation type="submission" date="2006-08" db="EMBL/GenBank/DDBJ databases">
        <title>Complete sequence of Shewanella frigidimarina NCIMB 400.</title>
        <authorList>
            <consortium name="US DOE Joint Genome Institute"/>
            <person name="Copeland A."/>
            <person name="Lucas S."/>
            <person name="Lapidus A."/>
            <person name="Barry K."/>
            <person name="Detter J.C."/>
            <person name="Glavina del Rio T."/>
            <person name="Hammon N."/>
            <person name="Israni S."/>
            <person name="Dalin E."/>
            <person name="Tice H."/>
            <person name="Pitluck S."/>
            <person name="Fredrickson J.K."/>
            <person name="Kolker E."/>
            <person name="McCuel L.A."/>
            <person name="DiChristina T."/>
            <person name="Nealson K.H."/>
            <person name="Newman D."/>
            <person name="Tiedje J.M."/>
            <person name="Zhou J."/>
            <person name="Romine M.F."/>
            <person name="Culley D.E."/>
            <person name="Serres M."/>
            <person name="Chertkov O."/>
            <person name="Brettin T."/>
            <person name="Bruce D."/>
            <person name="Han C."/>
            <person name="Tapia R."/>
            <person name="Gilna P."/>
            <person name="Schmutz J."/>
            <person name="Larimer F."/>
            <person name="Land M."/>
            <person name="Hauser L."/>
            <person name="Kyrpides N."/>
            <person name="Mikhailova N."/>
            <person name="Richardson P."/>
        </authorList>
    </citation>
    <scope>NUCLEOTIDE SEQUENCE [LARGE SCALE GENOMIC DNA]</scope>
    <source>
        <strain>NCIMB 400</strain>
    </source>
</reference>
<name>KATG2_SHEFN</name>
<proteinExistence type="inferred from homology"/>